<reference key="1">
    <citation type="journal article" date="2005" name="Science">
        <title>Life at depth: Photobacterium profundum genome sequence and expression analysis.</title>
        <authorList>
            <person name="Vezzi A."/>
            <person name="Campanaro S."/>
            <person name="D'Angelo M."/>
            <person name="Simonato F."/>
            <person name="Vitulo N."/>
            <person name="Lauro F.M."/>
            <person name="Cestaro A."/>
            <person name="Malacrida G."/>
            <person name="Simionati B."/>
            <person name="Cannata N."/>
            <person name="Romualdi C."/>
            <person name="Bartlett D.H."/>
            <person name="Valle G."/>
        </authorList>
    </citation>
    <scope>NUCLEOTIDE SEQUENCE [LARGE SCALE GENOMIC DNA]</scope>
    <source>
        <strain>ATCC BAA-1253 / SS9</strain>
    </source>
</reference>
<gene>
    <name evidence="1" type="primary">modC</name>
    <name type="ordered locus">PBPRB1347</name>
</gene>
<name>MODC_PHOPR</name>
<feature type="chain" id="PRO_0000092547" description="Molybdenum import ATP-binding protein ModC">
    <location>
        <begin position="1"/>
        <end position="358"/>
    </location>
</feature>
<feature type="domain" description="ABC transporter" evidence="1">
    <location>
        <begin position="3"/>
        <end position="228"/>
    </location>
</feature>
<feature type="domain" description="Mop" evidence="2">
    <location>
        <begin position="289"/>
        <end position="356"/>
    </location>
</feature>
<feature type="binding site" evidence="1">
    <location>
        <begin position="30"/>
        <end position="37"/>
    </location>
    <ligand>
        <name>ATP</name>
        <dbReference type="ChEBI" id="CHEBI:30616"/>
    </ligand>
</feature>
<protein>
    <recommendedName>
        <fullName evidence="1">Molybdenum import ATP-binding protein ModC</fullName>
        <ecNumber evidence="1">7.3.2.5</ecNumber>
    </recommendedName>
</protein>
<organism>
    <name type="scientific">Photobacterium profundum (strain SS9)</name>
    <dbReference type="NCBI Taxonomy" id="298386"/>
    <lineage>
        <taxon>Bacteria</taxon>
        <taxon>Pseudomonadati</taxon>
        <taxon>Pseudomonadota</taxon>
        <taxon>Gammaproteobacteria</taxon>
        <taxon>Vibrionales</taxon>
        <taxon>Vibrionaceae</taxon>
        <taxon>Photobacterium</taxon>
    </lineage>
</organism>
<evidence type="ECO:0000255" key="1">
    <source>
        <dbReference type="HAMAP-Rule" id="MF_01705"/>
    </source>
</evidence>
<evidence type="ECO:0000255" key="2">
    <source>
        <dbReference type="PROSITE-ProRule" id="PRU01213"/>
    </source>
</evidence>
<sequence>MTINVKQKLGDLDLDMNVDLPMQGITSIFGRSGAGKTSLINILSGLTRPDEGYISLGKRVLYDSTNDVFLPPEKRRIGYVFQDARLFPHYTVMGNLHYGCDHKDPQHFNDIVTLLGIEHLLNRYPSSLSGGEKQRVAIGRALLIKPDMLLMDEPLASLDLPRKQELMPYLEMLAKEVNTPIVYVTHSLDEILRLADHMVMINQGKVVVSGNVNSVWGSLEMRPWLPAKEQSSLLTARVNLNHPKYALTQVMLSHNAYLWVSRVNQERGEWIRVRIHSNDVSLTRVKPEQTSIRNVLLARIDKIHIIEDDQKVEIKLRVGETHLWANITLWAADELALKVGDEVYAQIKGVSVTKDDLA</sequence>
<comment type="function">
    <text evidence="1">Part of the ABC transporter complex ModABC involved in molybdenum import. Responsible for energy coupling to the transport system.</text>
</comment>
<comment type="catalytic activity">
    <reaction evidence="1">
        <text>molybdate(out) + ATP + H2O = molybdate(in) + ADP + phosphate + H(+)</text>
        <dbReference type="Rhea" id="RHEA:22020"/>
        <dbReference type="ChEBI" id="CHEBI:15377"/>
        <dbReference type="ChEBI" id="CHEBI:15378"/>
        <dbReference type="ChEBI" id="CHEBI:30616"/>
        <dbReference type="ChEBI" id="CHEBI:36264"/>
        <dbReference type="ChEBI" id="CHEBI:43474"/>
        <dbReference type="ChEBI" id="CHEBI:456216"/>
        <dbReference type="EC" id="7.3.2.5"/>
    </reaction>
</comment>
<comment type="subunit">
    <text evidence="1">The complex is composed of two ATP-binding proteins (ModC), two transmembrane proteins (ModB) and a solute-binding protein (ModA).</text>
</comment>
<comment type="subcellular location">
    <subcellularLocation>
        <location evidence="1">Cell inner membrane</location>
        <topology evidence="1">Peripheral membrane protein</topology>
    </subcellularLocation>
</comment>
<comment type="similarity">
    <text evidence="1">Belongs to the ABC transporter superfamily. Molybdate importer (TC 3.A.1.8) family.</text>
</comment>
<keyword id="KW-0067">ATP-binding</keyword>
<keyword id="KW-0997">Cell inner membrane</keyword>
<keyword id="KW-1003">Cell membrane</keyword>
<keyword id="KW-0472">Membrane</keyword>
<keyword id="KW-0500">Molybdenum</keyword>
<keyword id="KW-0547">Nucleotide-binding</keyword>
<keyword id="KW-1185">Reference proteome</keyword>
<keyword id="KW-1278">Translocase</keyword>
<keyword id="KW-0813">Transport</keyword>
<accession>Q6LHL2</accession>
<dbReference type="EC" id="7.3.2.5" evidence="1"/>
<dbReference type="EMBL" id="CR378679">
    <property type="protein sequence ID" value="CAG23218.1"/>
    <property type="molecule type" value="Genomic_DNA"/>
</dbReference>
<dbReference type="SMR" id="Q6LHL2"/>
<dbReference type="STRING" id="298386.PBPRB1347"/>
<dbReference type="KEGG" id="ppr:PBPRB1347"/>
<dbReference type="eggNOG" id="COG4148">
    <property type="taxonomic scope" value="Bacteria"/>
</dbReference>
<dbReference type="HOGENOM" id="CLU_000604_1_1_6"/>
<dbReference type="Proteomes" id="UP000000593">
    <property type="component" value="Chromosome 2"/>
</dbReference>
<dbReference type="GO" id="GO:0005886">
    <property type="term" value="C:plasma membrane"/>
    <property type="evidence" value="ECO:0007669"/>
    <property type="project" value="UniProtKB-SubCell"/>
</dbReference>
<dbReference type="GO" id="GO:0015412">
    <property type="term" value="F:ABC-type molybdate transporter activity"/>
    <property type="evidence" value="ECO:0007669"/>
    <property type="project" value="UniProtKB-EC"/>
</dbReference>
<dbReference type="GO" id="GO:0005524">
    <property type="term" value="F:ATP binding"/>
    <property type="evidence" value="ECO:0007669"/>
    <property type="project" value="UniProtKB-KW"/>
</dbReference>
<dbReference type="GO" id="GO:0016887">
    <property type="term" value="F:ATP hydrolysis activity"/>
    <property type="evidence" value="ECO:0007669"/>
    <property type="project" value="InterPro"/>
</dbReference>
<dbReference type="FunFam" id="3.40.50.300:FF:000634">
    <property type="entry name" value="Molybdenum import ATP-binding protein ModC"/>
    <property type="match status" value="1"/>
</dbReference>
<dbReference type="Gene3D" id="2.40.50.100">
    <property type="match status" value="1"/>
</dbReference>
<dbReference type="Gene3D" id="3.40.50.300">
    <property type="entry name" value="P-loop containing nucleotide triphosphate hydrolases"/>
    <property type="match status" value="1"/>
</dbReference>
<dbReference type="InterPro" id="IPR003593">
    <property type="entry name" value="AAA+_ATPase"/>
</dbReference>
<dbReference type="InterPro" id="IPR003439">
    <property type="entry name" value="ABC_transporter-like_ATP-bd"/>
</dbReference>
<dbReference type="InterPro" id="IPR017871">
    <property type="entry name" value="ABC_transporter-like_CS"/>
</dbReference>
<dbReference type="InterPro" id="IPR008995">
    <property type="entry name" value="Mo/tungstate-bd_C_term_dom"/>
</dbReference>
<dbReference type="InterPro" id="IPR011868">
    <property type="entry name" value="ModC_ABC_ATP-bd"/>
</dbReference>
<dbReference type="InterPro" id="IPR050334">
    <property type="entry name" value="Molybdenum_import_ModC"/>
</dbReference>
<dbReference type="InterPro" id="IPR004606">
    <property type="entry name" value="Mop_domain"/>
</dbReference>
<dbReference type="InterPro" id="IPR027417">
    <property type="entry name" value="P-loop_NTPase"/>
</dbReference>
<dbReference type="InterPro" id="IPR005116">
    <property type="entry name" value="Transp-assoc_OB_typ1"/>
</dbReference>
<dbReference type="NCBIfam" id="TIGR02142">
    <property type="entry name" value="modC_ABC"/>
    <property type="match status" value="1"/>
</dbReference>
<dbReference type="NCBIfam" id="TIGR00638">
    <property type="entry name" value="Mop"/>
    <property type="match status" value="1"/>
</dbReference>
<dbReference type="NCBIfam" id="NF008355">
    <property type="entry name" value="PRK11144.1"/>
    <property type="match status" value="1"/>
</dbReference>
<dbReference type="PANTHER" id="PTHR43514">
    <property type="entry name" value="ABC TRANSPORTER I FAMILY MEMBER 10"/>
    <property type="match status" value="1"/>
</dbReference>
<dbReference type="PANTHER" id="PTHR43514:SF4">
    <property type="entry name" value="ABC TRANSPORTER I FAMILY MEMBER 10"/>
    <property type="match status" value="1"/>
</dbReference>
<dbReference type="Pfam" id="PF00005">
    <property type="entry name" value="ABC_tran"/>
    <property type="match status" value="1"/>
</dbReference>
<dbReference type="Pfam" id="PF03459">
    <property type="entry name" value="TOBE"/>
    <property type="match status" value="1"/>
</dbReference>
<dbReference type="SMART" id="SM00382">
    <property type="entry name" value="AAA"/>
    <property type="match status" value="1"/>
</dbReference>
<dbReference type="SUPFAM" id="SSF50331">
    <property type="entry name" value="MOP-like"/>
    <property type="match status" value="1"/>
</dbReference>
<dbReference type="SUPFAM" id="SSF52540">
    <property type="entry name" value="P-loop containing nucleoside triphosphate hydrolases"/>
    <property type="match status" value="1"/>
</dbReference>
<dbReference type="PROSITE" id="PS00211">
    <property type="entry name" value="ABC_TRANSPORTER_1"/>
    <property type="match status" value="1"/>
</dbReference>
<dbReference type="PROSITE" id="PS50893">
    <property type="entry name" value="ABC_TRANSPORTER_2"/>
    <property type="match status" value="1"/>
</dbReference>
<dbReference type="PROSITE" id="PS51241">
    <property type="entry name" value="MODC"/>
    <property type="match status" value="1"/>
</dbReference>
<dbReference type="PROSITE" id="PS51866">
    <property type="entry name" value="MOP"/>
    <property type="match status" value="1"/>
</dbReference>
<proteinExistence type="inferred from homology"/>